<organism>
    <name type="scientific">Streptococcus suis (strain 05ZYH33)</name>
    <dbReference type="NCBI Taxonomy" id="391295"/>
    <lineage>
        <taxon>Bacteria</taxon>
        <taxon>Bacillati</taxon>
        <taxon>Bacillota</taxon>
        <taxon>Bacilli</taxon>
        <taxon>Lactobacillales</taxon>
        <taxon>Streptococcaceae</taxon>
        <taxon>Streptococcus</taxon>
    </lineage>
</organism>
<dbReference type="EMBL" id="CP000407">
    <property type="protein sequence ID" value="ABP89059.1"/>
    <property type="molecule type" value="Genomic_DNA"/>
</dbReference>
<dbReference type="SMR" id="A4VSH0"/>
<dbReference type="STRING" id="391295.SSU05_0087"/>
<dbReference type="KEGG" id="ssu:SSU05_0087"/>
<dbReference type="eggNOG" id="COG0098">
    <property type="taxonomic scope" value="Bacteria"/>
</dbReference>
<dbReference type="HOGENOM" id="CLU_065898_2_2_9"/>
<dbReference type="GO" id="GO:0015935">
    <property type="term" value="C:small ribosomal subunit"/>
    <property type="evidence" value="ECO:0007669"/>
    <property type="project" value="InterPro"/>
</dbReference>
<dbReference type="GO" id="GO:0019843">
    <property type="term" value="F:rRNA binding"/>
    <property type="evidence" value="ECO:0007669"/>
    <property type="project" value="UniProtKB-UniRule"/>
</dbReference>
<dbReference type="GO" id="GO:0003735">
    <property type="term" value="F:structural constituent of ribosome"/>
    <property type="evidence" value="ECO:0007669"/>
    <property type="project" value="InterPro"/>
</dbReference>
<dbReference type="GO" id="GO:0006412">
    <property type="term" value="P:translation"/>
    <property type="evidence" value="ECO:0007669"/>
    <property type="project" value="UniProtKB-UniRule"/>
</dbReference>
<dbReference type="FunFam" id="3.30.160.20:FF:000001">
    <property type="entry name" value="30S ribosomal protein S5"/>
    <property type="match status" value="1"/>
</dbReference>
<dbReference type="FunFam" id="3.30.230.10:FF:000002">
    <property type="entry name" value="30S ribosomal protein S5"/>
    <property type="match status" value="1"/>
</dbReference>
<dbReference type="Gene3D" id="3.30.160.20">
    <property type="match status" value="1"/>
</dbReference>
<dbReference type="Gene3D" id="3.30.230.10">
    <property type="match status" value="1"/>
</dbReference>
<dbReference type="HAMAP" id="MF_01307_B">
    <property type="entry name" value="Ribosomal_uS5_B"/>
    <property type="match status" value="1"/>
</dbReference>
<dbReference type="InterPro" id="IPR020568">
    <property type="entry name" value="Ribosomal_Su5_D2-typ_SF"/>
</dbReference>
<dbReference type="InterPro" id="IPR000851">
    <property type="entry name" value="Ribosomal_uS5"/>
</dbReference>
<dbReference type="InterPro" id="IPR005712">
    <property type="entry name" value="Ribosomal_uS5_bac-type"/>
</dbReference>
<dbReference type="InterPro" id="IPR005324">
    <property type="entry name" value="Ribosomal_uS5_C"/>
</dbReference>
<dbReference type="InterPro" id="IPR013810">
    <property type="entry name" value="Ribosomal_uS5_N"/>
</dbReference>
<dbReference type="InterPro" id="IPR018192">
    <property type="entry name" value="Ribosomal_uS5_N_CS"/>
</dbReference>
<dbReference type="InterPro" id="IPR014721">
    <property type="entry name" value="Ribsml_uS5_D2-typ_fold_subgr"/>
</dbReference>
<dbReference type="NCBIfam" id="TIGR01021">
    <property type="entry name" value="rpsE_bact"/>
    <property type="match status" value="1"/>
</dbReference>
<dbReference type="PANTHER" id="PTHR48277">
    <property type="entry name" value="MITOCHONDRIAL RIBOSOMAL PROTEIN S5"/>
    <property type="match status" value="1"/>
</dbReference>
<dbReference type="PANTHER" id="PTHR48277:SF1">
    <property type="entry name" value="MITOCHONDRIAL RIBOSOMAL PROTEIN S5"/>
    <property type="match status" value="1"/>
</dbReference>
<dbReference type="Pfam" id="PF00333">
    <property type="entry name" value="Ribosomal_S5"/>
    <property type="match status" value="1"/>
</dbReference>
<dbReference type="Pfam" id="PF03719">
    <property type="entry name" value="Ribosomal_S5_C"/>
    <property type="match status" value="1"/>
</dbReference>
<dbReference type="SUPFAM" id="SSF54768">
    <property type="entry name" value="dsRNA-binding domain-like"/>
    <property type="match status" value="1"/>
</dbReference>
<dbReference type="SUPFAM" id="SSF54211">
    <property type="entry name" value="Ribosomal protein S5 domain 2-like"/>
    <property type="match status" value="1"/>
</dbReference>
<dbReference type="PROSITE" id="PS00585">
    <property type="entry name" value="RIBOSOMAL_S5"/>
    <property type="match status" value="1"/>
</dbReference>
<dbReference type="PROSITE" id="PS50881">
    <property type="entry name" value="S5_DSRBD"/>
    <property type="match status" value="1"/>
</dbReference>
<accession>A4VSH0</accession>
<comment type="function">
    <text evidence="1">With S4 and S12 plays an important role in translational accuracy.</text>
</comment>
<comment type="function">
    <text evidence="1">Located at the back of the 30S subunit body where it stabilizes the conformation of the head with respect to the body.</text>
</comment>
<comment type="subunit">
    <text evidence="1">Part of the 30S ribosomal subunit. Contacts proteins S4 and S8.</text>
</comment>
<comment type="domain">
    <text>The N-terminal domain interacts with the head of the 30S subunit; the C-terminal domain interacts with the body and contacts protein S4. The interaction surface between S4 and S5 is involved in control of translational fidelity.</text>
</comment>
<comment type="similarity">
    <text evidence="1">Belongs to the universal ribosomal protein uS5 family.</text>
</comment>
<name>RS5_STRSY</name>
<reference key="1">
    <citation type="journal article" date="2007" name="PLoS ONE">
        <title>A glimpse of streptococcal toxic shock syndrome from comparative genomics of S. suis 2 Chinese isolates.</title>
        <authorList>
            <person name="Chen C."/>
            <person name="Tang J."/>
            <person name="Dong W."/>
            <person name="Wang C."/>
            <person name="Feng Y."/>
            <person name="Wang J."/>
            <person name="Zheng F."/>
            <person name="Pan X."/>
            <person name="Liu D."/>
            <person name="Li M."/>
            <person name="Song Y."/>
            <person name="Zhu X."/>
            <person name="Sun H."/>
            <person name="Feng T."/>
            <person name="Guo Z."/>
            <person name="Ju A."/>
            <person name="Ge J."/>
            <person name="Dong Y."/>
            <person name="Sun W."/>
            <person name="Jiang Y."/>
            <person name="Wang J."/>
            <person name="Yan J."/>
            <person name="Yang H."/>
            <person name="Wang X."/>
            <person name="Gao G.F."/>
            <person name="Yang R."/>
            <person name="Wang J."/>
            <person name="Yu J."/>
        </authorList>
    </citation>
    <scope>NUCLEOTIDE SEQUENCE [LARGE SCALE GENOMIC DNA]</scope>
    <source>
        <strain>05ZYH33</strain>
    </source>
</reference>
<keyword id="KW-0687">Ribonucleoprotein</keyword>
<keyword id="KW-0689">Ribosomal protein</keyword>
<keyword id="KW-0694">RNA-binding</keyword>
<keyword id="KW-0699">rRNA-binding</keyword>
<sequence length="164" mass="17155">MAFKDNAVEIEERVVAINRVTKVVKGGRRLRFAALVVVGDRNGRVGFGTGKAQEVPEAIRKAVESAKKNMIEVPMVGTTIPHEVRSEFGGARVLLKPASEGSGVAAGGATRAVIELAGIADVTSKSLGSNTPINIVRATVEGLKQLKRAEEVAALRGISVSDLA</sequence>
<feature type="chain" id="PRO_0000323213" description="Small ribosomal subunit protein uS5">
    <location>
        <begin position="1"/>
        <end position="164"/>
    </location>
</feature>
<feature type="domain" description="S5 DRBM" evidence="1">
    <location>
        <begin position="10"/>
        <end position="73"/>
    </location>
</feature>
<gene>
    <name evidence="1" type="primary">rpsE</name>
    <name type="ordered locus">SSU05_0087</name>
</gene>
<evidence type="ECO:0000255" key="1">
    <source>
        <dbReference type="HAMAP-Rule" id="MF_01307"/>
    </source>
</evidence>
<evidence type="ECO:0000305" key="2"/>
<proteinExistence type="inferred from homology"/>
<protein>
    <recommendedName>
        <fullName evidence="1">Small ribosomal subunit protein uS5</fullName>
    </recommendedName>
    <alternativeName>
        <fullName evidence="2">30S ribosomal protein S5</fullName>
    </alternativeName>
</protein>